<evidence type="ECO:0000250" key="1"/>
<evidence type="ECO:0000250" key="2">
    <source>
        <dbReference type="UniProtKB" id="P62871"/>
    </source>
</evidence>
<evidence type="ECO:0000250" key="3">
    <source>
        <dbReference type="UniProtKB" id="P62873"/>
    </source>
</evidence>
<evidence type="ECO:0000269" key="4">
    <source ref="6"/>
</evidence>
<evidence type="ECO:0000305" key="5"/>
<evidence type="ECO:0007744" key="6">
    <source>
    </source>
</evidence>
<evidence type="ECO:0007829" key="7">
    <source>
        <dbReference type="PDB" id="7MBX"/>
    </source>
</evidence>
<evidence type="ECO:0007829" key="8">
    <source>
        <dbReference type="PDB" id="7MBY"/>
    </source>
</evidence>
<evidence type="ECO:0007829" key="9">
    <source>
        <dbReference type="PDB" id="7WIG"/>
    </source>
</evidence>
<evidence type="ECO:0007829" key="10">
    <source>
        <dbReference type="PDB" id="8WZ2"/>
    </source>
</evidence>
<evidence type="ECO:0007829" key="11">
    <source>
        <dbReference type="PDB" id="8XGR"/>
    </source>
</evidence>
<evidence type="ECO:0007829" key="12">
    <source>
        <dbReference type="PDB" id="8ZBE"/>
    </source>
</evidence>
<keyword id="KW-0002">3D-structure</keyword>
<keyword id="KW-0007">Acetylation</keyword>
<keyword id="KW-0903">Direct protein sequencing</keyword>
<keyword id="KW-0597">Phosphoprotein</keyword>
<keyword id="KW-1185">Reference proteome</keyword>
<keyword id="KW-0677">Repeat</keyword>
<keyword id="KW-0807">Transducer</keyword>
<keyword id="KW-0853">WD repeat</keyword>
<feature type="initiator methionine" description="Removed" evidence="4">
    <location>
        <position position="1"/>
    </location>
</feature>
<feature type="chain" id="PRO_0000127690" description="Guanine nucleotide-binding protein G(I)/G(S)/G(T) subunit beta-1">
    <location>
        <begin position="2"/>
        <end position="340"/>
    </location>
</feature>
<feature type="repeat" description="WD 1" evidence="3">
    <location>
        <begin position="46"/>
        <end position="94"/>
    </location>
</feature>
<feature type="repeat" description="WD 2" evidence="3">
    <location>
        <begin position="95"/>
        <end position="140"/>
    </location>
</feature>
<feature type="repeat" description="WD 3" evidence="3">
    <location>
        <begin position="141"/>
        <end position="181"/>
    </location>
</feature>
<feature type="repeat" description="WD 4" evidence="3">
    <location>
        <begin position="182"/>
        <end position="223"/>
    </location>
</feature>
<feature type="repeat" description="WD 5" evidence="3">
    <location>
        <begin position="224"/>
        <end position="267"/>
    </location>
</feature>
<feature type="repeat" description="WD 6" evidence="3">
    <location>
        <begin position="268"/>
        <end position="309"/>
    </location>
</feature>
<feature type="repeat" description="WD 7" evidence="3">
    <location>
        <begin position="310"/>
        <end position="340"/>
    </location>
</feature>
<feature type="modified residue" description="N-acetylserine" evidence="4">
    <location>
        <position position="2"/>
    </location>
</feature>
<feature type="modified residue" description="Phosphoserine" evidence="6">
    <location>
        <position position="2"/>
    </location>
</feature>
<feature type="modified residue" description="Phosphohistidine" evidence="2">
    <location>
        <position position="266"/>
    </location>
</feature>
<feature type="sequence conflict" description="In Ref. 2; AAD00650." evidence="5" ref="2">
    <original>A</original>
    <variation>V</variation>
    <location>
        <position position="208"/>
    </location>
</feature>
<feature type="sequence conflict" description="In Ref. 2; AAD00650." evidence="5" ref="2">
    <original>S</original>
    <variation>P</variation>
    <location>
        <position position="277"/>
    </location>
</feature>
<feature type="sequence conflict" description="In Ref. 2; AAD00650." evidence="5" ref="2">
    <original>A</original>
    <variation>G</variation>
    <location>
        <position position="287"/>
    </location>
</feature>
<feature type="sequence conflict" description="In Ref. 2; AAD00650." evidence="5" ref="2">
    <original>K</original>
    <variation>N</variation>
    <location>
        <position position="301"/>
    </location>
</feature>
<feature type="sequence conflict" description="In Ref. 1; AAC72249." evidence="5" ref="1">
    <original>V</original>
    <variation>D</variation>
    <location>
        <position position="307"/>
    </location>
</feature>
<feature type="helix" evidence="7">
    <location>
        <begin position="3"/>
        <end position="24"/>
    </location>
</feature>
<feature type="helix" evidence="7">
    <location>
        <begin position="30"/>
        <end position="33"/>
    </location>
</feature>
<feature type="helix" evidence="7">
    <location>
        <begin position="34"/>
        <end position="36"/>
    </location>
</feature>
<feature type="strand" evidence="7">
    <location>
        <begin position="46"/>
        <end position="51"/>
    </location>
</feature>
<feature type="strand" evidence="7">
    <location>
        <begin position="58"/>
        <end position="63"/>
    </location>
</feature>
<feature type="strand" evidence="7">
    <location>
        <begin position="67"/>
        <end position="74"/>
    </location>
</feature>
<feature type="turn" evidence="7">
    <location>
        <begin position="75"/>
        <end position="77"/>
    </location>
</feature>
<feature type="strand" evidence="7">
    <location>
        <begin position="78"/>
        <end position="83"/>
    </location>
</feature>
<feature type="turn" evidence="7">
    <location>
        <begin position="84"/>
        <end position="87"/>
    </location>
</feature>
<feature type="strand" evidence="7">
    <location>
        <begin position="88"/>
        <end position="94"/>
    </location>
</feature>
<feature type="strand" evidence="7">
    <location>
        <begin position="96"/>
        <end position="98"/>
    </location>
</feature>
<feature type="strand" evidence="7">
    <location>
        <begin position="100"/>
        <end position="105"/>
    </location>
</feature>
<feature type="strand" evidence="7">
    <location>
        <begin position="109"/>
        <end position="116"/>
    </location>
</feature>
<feature type="strand" evidence="11">
    <location>
        <begin position="117"/>
        <end position="119"/>
    </location>
</feature>
<feature type="strand" evidence="7">
    <location>
        <begin position="121"/>
        <end position="127"/>
    </location>
</feature>
<feature type="strand" evidence="7">
    <location>
        <begin position="129"/>
        <end position="132"/>
    </location>
</feature>
<feature type="strand" evidence="7">
    <location>
        <begin position="134"/>
        <end position="139"/>
    </location>
</feature>
<feature type="strand" evidence="7">
    <location>
        <begin position="146"/>
        <end position="161"/>
    </location>
</feature>
<feature type="turn" evidence="9">
    <location>
        <begin position="162"/>
        <end position="164"/>
    </location>
</feature>
<feature type="strand" evidence="7">
    <location>
        <begin position="166"/>
        <end position="170"/>
    </location>
</feature>
<feature type="turn" evidence="7">
    <location>
        <begin position="171"/>
        <end position="174"/>
    </location>
</feature>
<feature type="strand" evidence="7">
    <location>
        <begin position="175"/>
        <end position="180"/>
    </location>
</feature>
<feature type="strand" evidence="7">
    <location>
        <begin position="187"/>
        <end position="192"/>
    </location>
</feature>
<feature type="strand" evidence="7">
    <location>
        <begin position="196"/>
        <end position="203"/>
    </location>
</feature>
<feature type="strand" evidence="7">
    <location>
        <begin position="206"/>
        <end position="212"/>
    </location>
</feature>
<feature type="turn" evidence="7">
    <location>
        <begin position="213"/>
        <end position="215"/>
    </location>
</feature>
<feature type="strand" evidence="7">
    <location>
        <begin position="218"/>
        <end position="223"/>
    </location>
</feature>
<feature type="strand" evidence="7">
    <location>
        <begin position="229"/>
        <end position="234"/>
    </location>
</feature>
<feature type="strand" evidence="7">
    <location>
        <begin position="238"/>
        <end position="245"/>
    </location>
</feature>
<feature type="strand" evidence="8">
    <location>
        <begin position="246"/>
        <end position="248"/>
    </location>
</feature>
<feature type="strand" evidence="7">
    <location>
        <begin position="250"/>
        <end position="254"/>
    </location>
</feature>
<feature type="turn" evidence="7">
    <location>
        <begin position="255"/>
        <end position="258"/>
    </location>
</feature>
<feature type="strand" evidence="7">
    <location>
        <begin position="259"/>
        <end position="264"/>
    </location>
</feature>
<feature type="strand" evidence="7">
    <location>
        <begin position="273"/>
        <end position="278"/>
    </location>
</feature>
<feature type="strand" evidence="7">
    <location>
        <begin position="280"/>
        <end position="282"/>
    </location>
</feature>
<feature type="strand" evidence="7">
    <location>
        <begin position="284"/>
        <end position="289"/>
    </location>
</feature>
<feature type="turn" evidence="10">
    <location>
        <begin position="290"/>
        <end position="292"/>
    </location>
</feature>
<feature type="strand" evidence="7">
    <location>
        <begin position="294"/>
        <end position="298"/>
    </location>
</feature>
<feature type="turn" evidence="7">
    <location>
        <begin position="299"/>
        <end position="301"/>
    </location>
</feature>
<feature type="strand" evidence="7">
    <location>
        <begin position="304"/>
        <end position="308"/>
    </location>
</feature>
<feature type="strand" evidence="7">
    <location>
        <begin position="315"/>
        <end position="320"/>
    </location>
</feature>
<feature type="strand" evidence="8">
    <location>
        <begin position="322"/>
        <end position="325"/>
    </location>
</feature>
<feature type="strand" evidence="7">
    <location>
        <begin position="327"/>
        <end position="331"/>
    </location>
</feature>
<feature type="strand" evidence="12">
    <location>
        <begin position="332"/>
        <end position="334"/>
    </location>
</feature>
<feature type="strand" evidence="7">
    <location>
        <begin position="336"/>
        <end position="340"/>
    </location>
</feature>
<gene>
    <name type="primary">Gnb1</name>
</gene>
<organism>
    <name type="scientific">Rattus norvegicus</name>
    <name type="common">Rat</name>
    <dbReference type="NCBI Taxonomy" id="10116"/>
    <lineage>
        <taxon>Eukaryota</taxon>
        <taxon>Metazoa</taxon>
        <taxon>Chordata</taxon>
        <taxon>Craniata</taxon>
        <taxon>Vertebrata</taxon>
        <taxon>Euteleostomi</taxon>
        <taxon>Mammalia</taxon>
        <taxon>Eutheria</taxon>
        <taxon>Euarchontoglires</taxon>
        <taxon>Glires</taxon>
        <taxon>Rodentia</taxon>
        <taxon>Myomorpha</taxon>
        <taxon>Muroidea</taxon>
        <taxon>Muridae</taxon>
        <taxon>Murinae</taxon>
        <taxon>Rattus</taxon>
    </lineage>
</organism>
<reference key="1">
    <citation type="submission" date="1995-08" db="EMBL/GenBank/DDBJ databases">
        <authorList>
            <person name="Kuroda S."/>
            <person name="Tokunaga C."/>
            <person name="Konishi H."/>
            <person name="Kikkawa U."/>
        </authorList>
    </citation>
    <scope>NUCLEOTIDE SEQUENCE [MRNA]</scope>
    <source>
        <strain>Sprague-Dawley</strain>
        <tissue>Brain</tissue>
    </source>
</reference>
<reference key="2">
    <citation type="journal article" date="1997" name="J. Neurosci.">
        <title>rGbeta1: a psychostimulant-regulated gene essential for establishing cocaine sensitization.</title>
        <authorList>
            <person name="Wang X.B."/>
            <person name="Funada M."/>
            <person name="Imai Y."/>
            <person name="Revay R.S."/>
            <person name="Ujike H."/>
            <person name="Vandenbergh D.J."/>
            <person name="Uhl G.R."/>
        </authorList>
    </citation>
    <scope>NUCLEOTIDE SEQUENCE [MRNA]</scope>
    <source>
        <strain>Sprague-Dawley</strain>
    </source>
</reference>
<reference key="3">
    <citation type="submission" date="2004-02" db="EMBL/GenBank/DDBJ databases">
        <title>Cloning and characterization of the rat G-protein beta 1 subunit.</title>
        <authorList>
            <person name="Puhl H.L. III"/>
            <person name="Ikeda S.R."/>
        </authorList>
    </citation>
    <scope>NUCLEOTIDE SEQUENCE [MRNA]</scope>
    <source>
        <strain>Wistar</strain>
        <tissue>Brain</tissue>
    </source>
</reference>
<reference key="4">
    <citation type="journal article" date="2004" name="Genome Res.">
        <title>The status, quality, and expansion of the NIH full-length cDNA project: the Mammalian Gene Collection (MGC).</title>
        <authorList>
            <consortium name="The MGC Project Team"/>
        </authorList>
    </citation>
    <scope>NUCLEOTIDE SEQUENCE [LARGE SCALE MRNA]</scope>
    <source>
        <tissue>Lung</tissue>
    </source>
</reference>
<reference key="5">
    <citation type="submission" date="2007-07" db="UniProtKB">
        <authorList>
            <person name="Lubec G."/>
            <person name="Diao W."/>
            <person name="Afjehi-Sadat L."/>
            <person name="Chen W.-Q."/>
            <person name="Kang S.U."/>
        </authorList>
    </citation>
    <scope>PROTEIN SEQUENCE OF 58-78; 90-96; 138-150; 198-209; 284-301 AND 257-280</scope>
    <scope>IDENTIFICATION BY MASS SPECTROMETRY</scope>
    <source>
        <strain>Sprague-Dawley</strain>
        <tissue>Brain</tissue>
        <tissue>Hippocampus</tissue>
    </source>
</reference>
<reference key="6">
    <citation type="submission" date="2007-02" db="UniProtKB">
        <authorList>
            <person name="Lubec G."/>
            <person name="Chen W.-Q."/>
        </authorList>
    </citation>
    <scope>ACETYLATION AT SER-2</scope>
    <scope>IDENTIFICATION BY MASS SPECTROMETRY</scope>
</reference>
<reference key="7">
    <citation type="journal article" date="2012" name="Nat. Commun.">
        <title>Quantitative maps of protein phosphorylation sites across 14 different rat organs and tissues.</title>
        <authorList>
            <person name="Lundby A."/>
            <person name="Secher A."/>
            <person name="Lage K."/>
            <person name="Nordsborg N.B."/>
            <person name="Dmytriyev A."/>
            <person name="Lundby C."/>
            <person name="Olsen J.V."/>
        </authorList>
    </citation>
    <scope>PHOSPHORYLATION [LARGE SCALE ANALYSIS] AT SER-2</scope>
    <scope>IDENTIFICATION BY MASS SPECTROMETRY [LARGE SCALE ANALYSIS]</scope>
</reference>
<dbReference type="EMBL" id="U34958">
    <property type="protein sequence ID" value="AAC72249.1"/>
    <property type="molecule type" value="mRNA"/>
</dbReference>
<dbReference type="EMBL" id="U88324">
    <property type="protein sequence ID" value="AAD00650.1"/>
    <property type="molecule type" value="mRNA"/>
</dbReference>
<dbReference type="EMBL" id="AY552805">
    <property type="protein sequence ID" value="AAS59143.1"/>
    <property type="molecule type" value="mRNA"/>
</dbReference>
<dbReference type="EMBL" id="BC078809">
    <property type="protein sequence ID" value="AAH78809.1"/>
    <property type="molecule type" value="mRNA"/>
</dbReference>
<dbReference type="RefSeq" id="NP_001416985.1">
    <property type="nucleotide sequence ID" value="NM_001430056.1"/>
</dbReference>
<dbReference type="RefSeq" id="NP_001416986.1">
    <property type="nucleotide sequence ID" value="NM_001430057.1"/>
</dbReference>
<dbReference type="RefSeq" id="NP_001416987.1">
    <property type="nucleotide sequence ID" value="NM_001430058.1"/>
</dbReference>
<dbReference type="RefSeq" id="NP_001416988.1">
    <property type="nucleotide sequence ID" value="NM_001430059.1"/>
</dbReference>
<dbReference type="RefSeq" id="NP_001416989.1">
    <property type="nucleotide sequence ID" value="NM_001430060.1"/>
</dbReference>
<dbReference type="RefSeq" id="NP_001416990.1">
    <property type="nucleotide sequence ID" value="NM_001430061.1"/>
</dbReference>
<dbReference type="RefSeq" id="NP_001416991.1">
    <property type="nucleotide sequence ID" value="NM_001430062.1"/>
</dbReference>
<dbReference type="RefSeq" id="NP_001416992.1">
    <property type="nucleotide sequence ID" value="NM_001430063.1"/>
</dbReference>
<dbReference type="RefSeq" id="NP_001416993.1">
    <property type="nucleotide sequence ID" value="NM_001430064.1"/>
</dbReference>
<dbReference type="RefSeq" id="NP_001416994.1">
    <property type="nucleotide sequence ID" value="NM_001430065.1"/>
</dbReference>
<dbReference type="RefSeq" id="NP_001416995.1">
    <property type="nucleotide sequence ID" value="NM_001430066.1"/>
</dbReference>
<dbReference type="RefSeq" id="NP_001416996.1">
    <property type="nucleotide sequence ID" value="NM_001430067.1"/>
</dbReference>
<dbReference type="RefSeq" id="NP_001416997.1">
    <property type="nucleotide sequence ID" value="NM_001430068.1"/>
</dbReference>
<dbReference type="RefSeq" id="NP_001416998.1">
    <property type="nucleotide sequence ID" value="NM_001430069.1"/>
</dbReference>
<dbReference type="RefSeq" id="NP_001416999.1">
    <property type="nucleotide sequence ID" value="NM_001430070.1"/>
</dbReference>
<dbReference type="RefSeq" id="NP_001417000.1">
    <property type="nucleotide sequence ID" value="NM_001430071.1"/>
</dbReference>
<dbReference type="RefSeq" id="NP_001417001.1">
    <property type="nucleotide sequence ID" value="NM_001430072.1"/>
</dbReference>
<dbReference type="RefSeq" id="NP_112249.2">
    <property type="nucleotide sequence ID" value="NM_030987.3"/>
</dbReference>
<dbReference type="RefSeq" id="XP_006239579.1">
    <property type="nucleotide sequence ID" value="XM_006239517.3"/>
</dbReference>
<dbReference type="RefSeq" id="XP_008762557.1">
    <property type="nucleotide sequence ID" value="XM_008764335.2"/>
</dbReference>
<dbReference type="RefSeq" id="XP_017448634.1">
    <property type="nucleotide sequence ID" value="XM_017593145.1"/>
</dbReference>
<dbReference type="RefSeq" id="XP_017448635.1">
    <property type="nucleotide sequence ID" value="XM_017593146.1"/>
</dbReference>
<dbReference type="RefSeq" id="XP_017448636.1">
    <property type="nucleotide sequence ID" value="XM_017593147.1"/>
</dbReference>
<dbReference type="RefSeq" id="XP_017448637.1">
    <property type="nucleotide sequence ID" value="XM_017593148.1"/>
</dbReference>
<dbReference type="RefSeq" id="XP_017448638.1">
    <property type="nucleotide sequence ID" value="XM_017593149.1"/>
</dbReference>
<dbReference type="PDB" id="3SN6">
    <property type="method" value="X-ray"/>
    <property type="resolution" value="3.20 A"/>
    <property type="chains" value="B=2-340"/>
</dbReference>
<dbReference type="PDB" id="5TDH">
    <property type="method" value="X-ray"/>
    <property type="resolution" value="3.00 A"/>
    <property type="chains" value="B/J=1-340"/>
</dbReference>
<dbReference type="PDB" id="5VAI">
    <property type="method" value="EM"/>
    <property type="resolution" value="4.10 A"/>
    <property type="chains" value="B=2-340"/>
</dbReference>
<dbReference type="PDB" id="6CMO">
    <property type="method" value="EM"/>
    <property type="resolution" value="4.50 A"/>
    <property type="chains" value="B=2-340"/>
</dbReference>
<dbReference type="PDB" id="6LPB">
    <property type="method" value="EM"/>
    <property type="resolution" value="3.90 A"/>
    <property type="chains" value="B=2-340"/>
</dbReference>
<dbReference type="PDB" id="6NBF">
    <property type="method" value="EM"/>
    <property type="resolution" value="3.00 A"/>
    <property type="chains" value="B=2-340"/>
</dbReference>
<dbReference type="PDB" id="6NBH">
    <property type="method" value="EM"/>
    <property type="resolution" value="3.50 A"/>
    <property type="chains" value="B=2-340"/>
</dbReference>
<dbReference type="PDB" id="6NBI">
    <property type="method" value="EM"/>
    <property type="resolution" value="4.00 A"/>
    <property type="chains" value="B=2-340"/>
</dbReference>
<dbReference type="PDB" id="6WWZ">
    <property type="method" value="EM"/>
    <property type="resolution" value="3.34 A"/>
    <property type="chains" value="B=2-340"/>
</dbReference>
<dbReference type="PDB" id="7BW0">
    <property type="method" value="EM"/>
    <property type="resolution" value="3.90 A"/>
    <property type="chains" value="B=2-340"/>
</dbReference>
<dbReference type="PDB" id="7CZ5">
    <property type="method" value="EM"/>
    <property type="resolution" value="2.60 A"/>
    <property type="chains" value="B=2-340"/>
</dbReference>
<dbReference type="PDB" id="7D3S">
    <property type="method" value="EM"/>
    <property type="resolution" value="2.90 A"/>
    <property type="chains" value="B=2-340"/>
</dbReference>
<dbReference type="PDB" id="7DH5">
    <property type="method" value="EM"/>
    <property type="resolution" value="3.16 A"/>
    <property type="chains" value="B=2-340"/>
</dbReference>
<dbReference type="PDB" id="7DTY">
    <property type="method" value="EM"/>
    <property type="resolution" value="2.98 A"/>
    <property type="chains" value="B=2-340"/>
</dbReference>
<dbReference type="PDB" id="7DUQ">
    <property type="method" value="EM"/>
    <property type="resolution" value="2.50 A"/>
    <property type="chains" value="B=2-340"/>
</dbReference>
<dbReference type="PDB" id="7DUR">
    <property type="method" value="EM"/>
    <property type="resolution" value="3.30 A"/>
    <property type="chains" value="B=2-340"/>
</dbReference>
<dbReference type="PDB" id="7DW9">
    <property type="method" value="EM"/>
    <property type="resolution" value="2.60 A"/>
    <property type="chains" value="B=2-340"/>
</dbReference>
<dbReference type="PDB" id="7EIB">
    <property type="method" value="EM"/>
    <property type="resolution" value="3.00 A"/>
    <property type="chains" value="C=2-340"/>
</dbReference>
<dbReference type="PDB" id="7EQ1">
    <property type="method" value="EM"/>
    <property type="resolution" value="3.30 A"/>
    <property type="chains" value="B=2-340"/>
</dbReference>
<dbReference type="PDB" id="7EVM">
    <property type="method" value="EM"/>
    <property type="resolution" value="2.50 A"/>
    <property type="chains" value="B=2-340"/>
</dbReference>
<dbReference type="PDB" id="7F16">
    <property type="method" value="EM"/>
    <property type="resolution" value="2.80 A"/>
    <property type="chains" value="B=2-340"/>
</dbReference>
<dbReference type="PDB" id="7F2O">
    <property type="method" value="EM"/>
    <property type="resolution" value="2.90 A"/>
    <property type="chains" value="B=2-340"/>
</dbReference>
<dbReference type="PDB" id="7FIG">
    <property type="method" value="EM"/>
    <property type="resolution" value="3.90 A"/>
    <property type="chains" value="B=2-340"/>
</dbReference>
<dbReference type="PDB" id="7FIH">
    <property type="method" value="EM"/>
    <property type="resolution" value="3.20 A"/>
    <property type="chains" value="B=2-340"/>
</dbReference>
<dbReference type="PDB" id="7FII">
    <property type="method" value="EM"/>
    <property type="resolution" value="4.30 A"/>
    <property type="chains" value="B=2-340"/>
</dbReference>
<dbReference type="PDB" id="7FIM">
    <property type="method" value="EM"/>
    <property type="resolution" value="3.40 A"/>
    <property type="chains" value="B=2-340"/>
</dbReference>
<dbReference type="PDB" id="7FIN">
    <property type="method" value="EM"/>
    <property type="resolution" value="3.10 A"/>
    <property type="chains" value="B=2-340"/>
</dbReference>
<dbReference type="PDB" id="7FIY">
    <property type="method" value="EM"/>
    <property type="resolution" value="3.40 A"/>
    <property type="chains" value="B=2-340"/>
</dbReference>
<dbReference type="PDB" id="7LJC">
    <property type="method" value="EM"/>
    <property type="resolution" value="3.00 A"/>
    <property type="chains" value="B=2-340"/>
</dbReference>
<dbReference type="PDB" id="7LJD">
    <property type="method" value="EM"/>
    <property type="resolution" value="3.20 A"/>
    <property type="chains" value="B=2-340"/>
</dbReference>
<dbReference type="PDB" id="7MBX">
    <property type="method" value="EM"/>
    <property type="resolution" value="1.95 A"/>
    <property type="chains" value="B=1-340"/>
</dbReference>
<dbReference type="PDB" id="7MBY">
    <property type="method" value="EM"/>
    <property type="resolution" value="2.44 A"/>
    <property type="chains" value="B=1-340"/>
</dbReference>
<dbReference type="PDB" id="7PIU">
    <property type="method" value="EM"/>
    <property type="resolution" value="2.58 A"/>
    <property type="chains" value="B=2-340"/>
</dbReference>
<dbReference type="PDB" id="7PIV">
    <property type="method" value="EM"/>
    <property type="resolution" value="2.86 A"/>
    <property type="chains" value="B=2-340"/>
</dbReference>
<dbReference type="PDB" id="7T6S">
    <property type="method" value="EM"/>
    <property type="resolution" value="3.00 A"/>
    <property type="chains" value="B=2-340"/>
</dbReference>
<dbReference type="PDB" id="7T6T">
    <property type="method" value="EM"/>
    <property type="resolution" value="3.20 A"/>
    <property type="chains" value="B=2-340"/>
</dbReference>
<dbReference type="PDB" id="7T6U">
    <property type="method" value="EM"/>
    <property type="resolution" value="2.90 A"/>
    <property type="chains" value="B=2-340"/>
</dbReference>
<dbReference type="PDB" id="7T6V">
    <property type="method" value="EM"/>
    <property type="resolution" value="3.10 A"/>
    <property type="chains" value="B=2-340"/>
</dbReference>
<dbReference type="PDB" id="7TRY">
    <property type="method" value="EM"/>
    <property type="resolution" value="3.70 A"/>
    <property type="chains" value="B=2-340"/>
</dbReference>
<dbReference type="PDB" id="7TS0">
    <property type="method" value="EM"/>
    <property type="resolution" value="2.80 A"/>
    <property type="chains" value="B=2-340"/>
</dbReference>
<dbReference type="PDB" id="7V35">
    <property type="method" value="EM"/>
    <property type="resolution" value="3.40 A"/>
    <property type="chains" value="B=2-340"/>
</dbReference>
<dbReference type="PDB" id="7V9L">
    <property type="method" value="EM"/>
    <property type="resolution" value="2.60 A"/>
    <property type="chains" value="B=2-340"/>
</dbReference>
<dbReference type="PDB" id="7V9M">
    <property type="method" value="EM"/>
    <property type="resolution" value="3.29 A"/>
    <property type="chains" value="B=2-340"/>
</dbReference>
<dbReference type="PDB" id="7VAB">
    <property type="method" value="EM"/>
    <property type="resolution" value="3.20 A"/>
    <property type="chains" value="B=2-340"/>
</dbReference>
<dbReference type="PDB" id="7VBH">
    <property type="method" value="EM"/>
    <property type="resolution" value="3.00 A"/>
    <property type="chains" value="B=2-340"/>
</dbReference>
<dbReference type="PDB" id="7VBI">
    <property type="method" value="EM"/>
    <property type="resolution" value="3.00 A"/>
    <property type="chains" value="B=2-340"/>
</dbReference>
<dbReference type="PDB" id="7VGY">
    <property type="method" value="EM"/>
    <property type="resolution" value="3.10 A"/>
    <property type="chains" value="C=2-340"/>
</dbReference>
<dbReference type="PDB" id="7VGZ">
    <property type="method" value="EM"/>
    <property type="resolution" value="3.30 A"/>
    <property type="chains" value="D=2-340"/>
</dbReference>
<dbReference type="PDB" id="7VH0">
    <property type="method" value="EM"/>
    <property type="resolution" value="3.46 A"/>
    <property type="chains" value="C=2-340"/>
</dbReference>
<dbReference type="PDB" id="7VQX">
    <property type="method" value="EM"/>
    <property type="resolution" value="2.74 A"/>
    <property type="chains" value="B=2-340"/>
</dbReference>
<dbReference type="PDB" id="7VVJ">
    <property type="method" value="EM"/>
    <property type="resolution" value="3.20 A"/>
    <property type="chains" value="B=2-340"/>
</dbReference>
<dbReference type="PDB" id="7VVK">
    <property type="method" value="EM"/>
    <property type="resolution" value="3.30 A"/>
    <property type="chains" value="B=2-340"/>
</dbReference>
<dbReference type="PDB" id="7VVL">
    <property type="method" value="EM"/>
    <property type="resolution" value="2.80 A"/>
    <property type="chains" value="B=2-340"/>
</dbReference>
<dbReference type="PDB" id="7VVM">
    <property type="method" value="EM"/>
    <property type="resolution" value="3.20 A"/>
    <property type="chains" value="B=2-340"/>
</dbReference>
<dbReference type="PDB" id="7VVN">
    <property type="method" value="EM"/>
    <property type="resolution" value="3.80 A"/>
    <property type="chains" value="B=2-340"/>
</dbReference>
<dbReference type="PDB" id="7VVO">
    <property type="method" value="EM"/>
    <property type="resolution" value="4.10 A"/>
    <property type="chains" value="B=2-340"/>
</dbReference>
<dbReference type="PDB" id="7WBJ">
    <property type="method" value="EM"/>
    <property type="resolution" value="3.42 A"/>
    <property type="chains" value="B=2-340"/>
</dbReference>
<dbReference type="PDB" id="7WIC">
    <property type="method" value="EM"/>
    <property type="resolution" value="2.80 A"/>
    <property type="chains" value="B=2-340"/>
</dbReference>
<dbReference type="PDB" id="7WIG">
    <property type="method" value="EM"/>
    <property type="resolution" value="2.70 A"/>
    <property type="chains" value="B=2-340"/>
</dbReference>
<dbReference type="PDB" id="7WQ3">
    <property type="method" value="EM"/>
    <property type="resolution" value="2.70 A"/>
    <property type="chains" value="B=2-340"/>
</dbReference>
<dbReference type="PDB" id="7WQ4">
    <property type="method" value="EM"/>
    <property type="resolution" value="2.60 A"/>
    <property type="chains" value="B=1-340"/>
</dbReference>
<dbReference type="PDB" id="7X8R">
    <property type="method" value="EM"/>
    <property type="resolution" value="2.61 A"/>
    <property type="chains" value="B=2-340"/>
</dbReference>
<dbReference type="PDB" id="7X8S">
    <property type="method" value="EM"/>
    <property type="resolution" value="3.09 A"/>
    <property type="chains" value="B=2-340"/>
</dbReference>
<dbReference type="PDB" id="7XJH">
    <property type="method" value="EM"/>
    <property type="resolution" value="3.30 A"/>
    <property type="chains" value="B=2-340"/>
</dbReference>
<dbReference type="PDB" id="7XJI">
    <property type="method" value="EM"/>
    <property type="resolution" value="3.90 A"/>
    <property type="chains" value="B=2-340"/>
</dbReference>
<dbReference type="PDB" id="7XW9">
    <property type="method" value="EM"/>
    <property type="resolution" value="2.70 A"/>
    <property type="chains" value="B=2-340"/>
</dbReference>
<dbReference type="PDB" id="7XWO">
    <property type="method" value="EM"/>
    <property type="resolution" value="2.70 A"/>
    <property type="chains" value="C=2-340"/>
</dbReference>
<dbReference type="PDB" id="7Y35">
    <property type="method" value="EM"/>
    <property type="resolution" value="2.90 A"/>
    <property type="chains" value="B=2-340"/>
</dbReference>
<dbReference type="PDB" id="7Y36">
    <property type="method" value="EM"/>
    <property type="resolution" value="2.80 A"/>
    <property type="chains" value="B=2-340"/>
</dbReference>
<dbReference type="PDB" id="7YU3">
    <property type="method" value="EM"/>
    <property type="resolution" value="3.40 A"/>
    <property type="chains" value="B=2-340"/>
</dbReference>
<dbReference type="PDB" id="7YU5">
    <property type="method" value="EM"/>
    <property type="resolution" value="3.30 A"/>
    <property type="chains" value="B=2-340"/>
</dbReference>
<dbReference type="PDB" id="7YU6">
    <property type="method" value="EM"/>
    <property type="resolution" value="3.50 A"/>
    <property type="chains" value="B=2-340"/>
</dbReference>
<dbReference type="PDB" id="7YU7">
    <property type="method" value="EM"/>
    <property type="resolution" value="3.80 A"/>
    <property type="chains" value="B=2-340"/>
</dbReference>
<dbReference type="PDB" id="7YU8">
    <property type="method" value="EM"/>
    <property type="resolution" value="4.50 A"/>
    <property type="chains" value="B=2-340"/>
</dbReference>
<dbReference type="PDB" id="8EF5">
    <property type="method" value="EM"/>
    <property type="resolution" value="3.30 A"/>
    <property type="chains" value="B=2-340"/>
</dbReference>
<dbReference type="PDB" id="8EF6">
    <property type="method" value="EM"/>
    <property type="resolution" value="3.20 A"/>
    <property type="chains" value="B=2-340"/>
</dbReference>
<dbReference type="PDB" id="8EFB">
    <property type="method" value="EM"/>
    <property type="resolution" value="3.20 A"/>
    <property type="chains" value="B=2-340"/>
</dbReference>
<dbReference type="PDB" id="8EFL">
    <property type="method" value="EM"/>
    <property type="resolution" value="3.20 A"/>
    <property type="chains" value="B=2-340"/>
</dbReference>
<dbReference type="PDB" id="8EFO">
    <property type="method" value="EM"/>
    <property type="resolution" value="2.80 A"/>
    <property type="chains" value="B=2-340"/>
</dbReference>
<dbReference type="PDB" id="8EFQ">
    <property type="method" value="EM"/>
    <property type="resolution" value="3.30 A"/>
    <property type="chains" value="B=2-340"/>
</dbReference>
<dbReference type="PDB" id="8F7Q">
    <property type="method" value="EM"/>
    <property type="resolution" value="3.22 A"/>
    <property type="chains" value="B=2-340"/>
</dbReference>
<dbReference type="PDB" id="8F7R">
    <property type="method" value="EM"/>
    <property type="resolution" value="3.28 A"/>
    <property type="chains" value="B=2-340"/>
</dbReference>
<dbReference type="PDB" id="8F7S">
    <property type="method" value="EM"/>
    <property type="resolution" value="3.00 A"/>
    <property type="chains" value="B=2-340"/>
</dbReference>
<dbReference type="PDB" id="8F7W">
    <property type="method" value="EM"/>
    <property type="resolution" value="3.19 A"/>
    <property type="chains" value="B=2-340"/>
</dbReference>
<dbReference type="PDB" id="8F7X">
    <property type="method" value="EM"/>
    <property type="resolution" value="3.28 A"/>
    <property type="chains" value="B=2-340"/>
</dbReference>
<dbReference type="PDB" id="8GW8">
    <property type="method" value="EM"/>
    <property type="resolution" value="2.90 A"/>
    <property type="chains" value="B=2-340"/>
</dbReference>
<dbReference type="PDB" id="8HA0">
    <property type="method" value="EM"/>
    <property type="resolution" value="2.62 A"/>
    <property type="chains" value="B=2-340"/>
</dbReference>
<dbReference type="PDB" id="8HAF">
    <property type="method" value="EM"/>
    <property type="resolution" value="3.25 A"/>
    <property type="chains" value="B=2-340"/>
</dbReference>
<dbReference type="PDB" id="8HAO">
    <property type="method" value="EM"/>
    <property type="resolution" value="3.76 A"/>
    <property type="chains" value="B/D=1-340"/>
</dbReference>
<dbReference type="PDB" id="8HK2">
    <property type="method" value="EM"/>
    <property type="resolution" value="2.90 A"/>
    <property type="chains" value="C=2-340"/>
</dbReference>
<dbReference type="PDB" id="8HK3">
    <property type="method" value="EM"/>
    <property type="resolution" value="3.20 A"/>
    <property type="chains" value="B=2-340"/>
</dbReference>
<dbReference type="PDB" id="8HK5">
    <property type="method" value="EM"/>
    <property type="resolution" value="3.00 A"/>
    <property type="chains" value="D=2-340"/>
</dbReference>
<dbReference type="PDB" id="8ITL">
    <property type="method" value="EM"/>
    <property type="resolution" value="3.23 A"/>
    <property type="chains" value="B=2-340"/>
</dbReference>
<dbReference type="PDB" id="8ITM">
    <property type="method" value="EM"/>
    <property type="resolution" value="3.13 A"/>
    <property type="chains" value="B=2-340"/>
</dbReference>
<dbReference type="PDB" id="8IY5">
    <property type="method" value="EM"/>
    <property type="resolution" value="2.80 A"/>
    <property type="chains" value="B=1-340"/>
</dbReference>
<dbReference type="PDB" id="8JBF">
    <property type="method" value="EM"/>
    <property type="resolution" value="3.00 A"/>
    <property type="chains" value="D=2-340"/>
</dbReference>
<dbReference type="PDB" id="8JBG">
    <property type="method" value="EM"/>
    <property type="resolution" value="2.80 A"/>
    <property type="chains" value="D=2-340"/>
</dbReference>
<dbReference type="PDB" id="8JBH">
    <property type="method" value="EM"/>
    <property type="resolution" value="2.90 A"/>
    <property type="chains" value="D=2-340"/>
</dbReference>
<dbReference type="PDB" id="8JIP">
    <property type="method" value="EM"/>
    <property type="resolution" value="2.85 A"/>
    <property type="chains" value="B=2-340"/>
</dbReference>
<dbReference type="PDB" id="8JIQ">
    <property type="method" value="EM"/>
    <property type="resolution" value="3.40 A"/>
    <property type="chains" value="B=2-340"/>
</dbReference>
<dbReference type="PDB" id="8JIR">
    <property type="method" value="EM"/>
    <property type="resolution" value="2.57 A"/>
    <property type="chains" value="B=2-340"/>
</dbReference>
<dbReference type="PDB" id="8JIS">
    <property type="method" value="EM"/>
    <property type="resolution" value="2.46 A"/>
    <property type="chains" value="B=3-340"/>
</dbReference>
<dbReference type="PDB" id="8JIT">
    <property type="method" value="EM"/>
    <property type="resolution" value="2.91 A"/>
    <property type="chains" value="B=2-340"/>
</dbReference>
<dbReference type="PDB" id="8JIU">
    <property type="method" value="EM"/>
    <property type="resolution" value="2.76 A"/>
    <property type="chains" value="B=2-340"/>
</dbReference>
<dbReference type="PDB" id="8WA3">
    <property type="method" value="EM"/>
    <property type="resolution" value="2.86 A"/>
    <property type="chains" value="B=2-340"/>
</dbReference>
<dbReference type="PDB" id="8WG7">
    <property type="method" value="EM"/>
    <property type="resolution" value="2.54 A"/>
    <property type="chains" value="B=2-340"/>
</dbReference>
<dbReference type="PDB" id="8WG8">
    <property type="method" value="EM"/>
    <property type="resolution" value="2.71 A"/>
    <property type="chains" value="B=2-340"/>
</dbReference>
<dbReference type="PDB" id="8WZ2">
    <property type="method" value="EM"/>
    <property type="resolution" value="2.73 A"/>
    <property type="chains" value="B=1-340"/>
</dbReference>
<dbReference type="PDB" id="8X16">
    <property type="method" value="EM"/>
    <property type="resolution" value="3.29 A"/>
    <property type="chains" value="B=2-340"/>
</dbReference>
<dbReference type="PDB" id="8X17">
    <property type="method" value="EM"/>
    <property type="resolution" value="3.19 A"/>
    <property type="chains" value="B=2-340"/>
</dbReference>
<dbReference type="PDB" id="8X9S">
    <property type="method" value="EM"/>
    <property type="resolution" value="3.49 A"/>
    <property type="chains" value="B=2-340"/>
</dbReference>
<dbReference type="PDB" id="8X9T">
    <property type="method" value="EM"/>
    <property type="resolution" value="2.75 A"/>
    <property type="chains" value="B=2-340"/>
</dbReference>
<dbReference type="PDB" id="8X9U">
    <property type="method" value="EM"/>
    <property type="resolution" value="2.88 A"/>
    <property type="chains" value="B=2-340"/>
</dbReference>
<dbReference type="PDB" id="8XBE">
    <property type="method" value="EM"/>
    <property type="resolution" value="3.40 A"/>
    <property type="chains" value="C=2-340"/>
</dbReference>
<dbReference type="PDB" id="8XBH">
    <property type="method" value="EM"/>
    <property type="resolution" value="2.83 A"/>
    <property type="chains" value="B=2-340"/>
</dbReference>
<dbReference type="PDB" id="8XGR">
    <property type="method" value="EM"/>
    <property type="resolution" value="3.20 A"/>
    <property type="chains" value="B=1-340"/>
</dbReference>
<dbReference type="PDB" id="8XOR">
    <property type="method" value="EM"/>
    <property type="resolution" value="3.00 A"/>
    <property type="chains" value="B=2-340"/>
</dbReference>
<dbReference type="PDB" id="8XOS">
    <property type="method" value="EM"/>
    <property type="resolution" value="3.20 A"/>
    <property type="chains" value="B=2-340"/>
</dbReference>
<dbReference type="PDB" id="8YFS">
    <property type="method" value="EM"/>
    <property type="resolution" value="2.80 A"/>
    <property type="chains" value="B=2-340"/>
</dbReference>
<dbReference type="PDB" id="8YK0">
    <property type="method" value="EM"/>
    <property type="resolution" value="2.40 A"/>
    <property type="chains" value="D=3-340"/>
</dbReference>
<dbReference type="PDB" id="8YKV">
    <property type="method" value="EM"/>
    <property type="resolution" value="2.48 A"/>
    <property type="chains" value="B=1-340"/>
</dbReference>
<dbReference type="PDB" id="8YKW">
    <property type="method" value="EM"/>
    <property type="resolution" value="2.75 A"/>
    <property type="chains" value="B=1-340"/>
</dbReference>
<dbReference type="PDB" id="8YKX">
    <property type="method" value="EM"/>
    <property type="resolution" value="2.69 A"/>
    <property type="chains" value="B=1-340"/>
</dbReference>
<dbReference type="PDB" id="8ZBE">
    <property type="method" value="EM"/>
    <property type="resolution" value="3.24 A"/>
    <property type="chains" value="C=2-340"/>
</dbReference>
<dbReference type="PDB" id="8ZCJ">
    <property type="method" value="EM"/>
    <property type="resolution" value="3.09 A"/>
    <property type="chains" value="C=2-340"/>
</dbReference>
<dbReference type="PDB" id="8ZH8">
    <property type="method" value="EM"/>
    <property type="resolution" value="3.19 A"/>
    <property type="chains" value="B=2-340"/>
</dbReference>
<dbReference type="PDB" id="9F33">
    <property type="method" value="EM"/>
    <property type="resolution" value="3.05 A"/>
    <property type="chains" value="B=2-340"/>
</dbReference>
<dbReference type="PDB" id="9F34">
    <property type="method" value="EM"/>
    <property type="resolution" value="3.09 A"/>
    <property type="chains" value="B=2-340"/>
</dbReference>
<dbReference type="PDB" id="9IJD">
    <property type="method" value="EM"/>
    <property type="resolution" value="2.76 A"/>
    <property type="chains" value="B=2-340"/>
</dbReference>
<dbReference type="PDB" id="9IJE">
    <property type="method" value="EM"/>
    <property type="resolution" value="2.34 A"/>
    <property type="chains" value="B=2-340"/>
</dbReference>
<dbReference type="PDB" id="9J1P">
    <property type="method" value="EM"/>
    <property type="resolution" value="2.99 A"/>
    <property type="chains" value="B=2-340"/>
</dbReference>
<dbReference type="PDB" id="9J5V">
    <property type="method" value="EM"/>
    <property type="resolution" value="2.86 A"/>
    <property type="chains" value="B=2-340"/>
</dbReference>
<dbReference type="PDB" id="9JR2">
    <property type="method" value="EM"/>
    <property type="resolution" value="2.80 A"/>
    <property type="chains" value="B=2-340"/>
</dbReference>
<dbReference type="PDB" id="9JR3">
    <property type="method" value="EM"/>
    <property type="resolution" value="2.80 A"/>
    <property type="chains" value="B=2-340"/>
</dbReference>
<dbReference type="PDBsum" id="3SN6"/>
<dbReference type="PDBsum" id="5TDH"/>
<dbReference type="PDBsum" id="5VAI"/>
<dbReference type="PDBsum" id="6CMO"/>
<dbReference type="PDBsum" id="6LPB"/>
<dbReference type="PDBsum" id="6NBF"/>
<dbReference type="PDBsum" id="6NBH"/>
<dbReference type="PDBsum" id="6NBI"/>
<dbReference type="PDBsum" id="6WWZ"/>
<dbReference type="PDBsum" id="7BW0"/>
<dbReference type="PDBsum" id="7CZ5"/>
<dbReference type="PDBsum" id="7D3S"/>
<dbReference type="PDBsum" id="7DH5"/>
<dbReference type="PDBsum" id="7DTY"/>
<dbReference type="PDBsum" id="7DUQ"/>
<dbReference type="PDBsum" id="7DUR"/>
<dbReference type="PDBsum" id="7DW9"/>
<dbReference type="PDBsum" id="7EIB"/>
<dbReference type="PDBsum" id="7EQ1"/>
<dbReference type="PDBsum" id="7EVM"/>
<dbReference type="PDBsum" id="7F16"/>
<dbReference type="PDBsum" id="7F2O"/>
<dbReference type="PDBsum" id="7FIG"/>
<dbReference type="PDBsum" id="7FIH"/>
<dbReference type="PDBsum" id="7FII"/>
<dbReference type="PDBsum" id="7FIM"/>
<dbReference type="PDBsum" id="7FIN"/>
<dbReference type="PDBsum" id="7FIY"/>
<dbReference type="PDBsum" id="7LJC"/>
<dbReference type="PDBsum" id="7LJD"/>
<dbReference type="PDBsum" id="7MBX"/>
<dbReference type="PDBsum" id="7MBY"/>
<dbReference type="PDBsum" id="7PIU"/>
<dbReference type="PDBsum" id="7PIV"/>
<dbReference type="PDBsum" id="7T6S"/>
<dbReference type="PDBsum" id="7T6T"/>
<dbReference type="PDBsum" id="7T6U"/>
<dbReference type="PDBsum" id="7T6V"/>
<dbReference type="PDBsum" id="7TRY"/>
<dbReference type="PDBsum" id="7TS0"/>
<dbReference type="PDBsum" id="7V35"/>
<dbReference type="PDBsum" id="7V9L"/>
<dbReference type="PDBsum" id="7V9M"/>
<dbReference type="PDBsum" id="7VAB"/>
<dbReference type="PDBsum" id="7VBH"/>
<dbReference type="PDBsum" id="7VBI"/>
<dbReference type="PDBsum" id="7VGY"/>
<dbReference type="PDBsum" id="7VGZ"/>
<dbReference type="PDBsum" id="7VH0"/>
<dbReference type="PDBsum" id="7VQX"/>
<dbReference type="PDBsum" id="7VVJ"/>
<dbReference type="PDBsum" id="7VVK"/>
<dbReference type="PDBsum" id="7VVL"/>
<dbReference type="PDBsum" id="7VVM"/>
<dbReference type="PDBsum" id="7VVN"/>
<dbReference type="PDBsum" id="7VVO"/>
<dbReference type="PDBsum" id="7WBJ"/>
<dbReference type="PDBsum" id="7WIC"/>
<dbReference type="PDBsum" id="7WIG"/>
<dbReference type="PDBsum" id="7WQ3"/>
<dbReference type="PDBsum" id="7WQ4"/>
<dbReference type="PDBsum" id="7X8R"/>
<dbReference type="PDBsum" id="7X8S"/>
<dbReference type="PDBsum" id="7XJH"/>
<dbReference type="PDBsum" id="7XJI"/>
<dbReference type="PDBsum" id="7XW9"/>
<dbReference type="PDBsum" id="7XWO"/>
<dbReference type="PDBsum" id="7Y35"/>
<dbReference type="PDBsum" id="7Y36"/>
<dbReference type="PDBsum" id="7YU3"/>
<dbReference type="PDBsum" id="7YU5"/>
<dbReference type="PDBsum" id="7YU6"/>
<dbReference type="PDBsum" id="7YU7"/>
<dbReference type="PDBsum" id="7YU8"/>
<dbReference type="PDBsum" id="8EF5"/>
<dbReference type="PDBsum" id="8EF6"/>
<dbReference type="PDBsum" id="8EFB"/>
<dbReference type="PDBsum" id="8EFL"/>
<dbReference type="PDBsum" id="8EFO"/>
<dbReference type="PDBsum" id="8EFQ"/>
<dbReference type="PDBsum" id="8F7Q"/>
<dbReference type="PDBsum" id="8F7R"/>
<dbReference type="PDBsum" id="8F7S"/>
<dbReference type="PDBsum" id="8F7W"/>
<dbReference type="PDBsum" id="8F7X"/>
<dbReference type="PDBsum" id="8GW8"/>
<dbReference type="PDBsum" id="8HA0"/>
<dbReference type="PDBsum" id="8HAF"/>
<dbReference type="PDBsum" id="8HAO"/>
<dbReference type="PDBsum" id="8HK2"/>
<dbReference type="PDBsum" id="8HK3"/>
<dbReference type="PDBsum" id="8HK5"/>
<dbReference type="PDBsum" id="8ITL"/>
<dbReference type="PDBsum" id="8ITM"/>
<dbReference type="PDBsum" id="8IY5"/>
<dbReference type="PDBsum" id="8JBF"/>
<dbReference type="PDBsum" id="8JBG"/>
<dbReference type="PDBsum" id="8JBH"/>
<dbReference type="PDBsum" id="8JIP"/>
<dbReference type="PDBsum" id="8JIQ"/>
<dbReference type="PDBsum" id="8JIR"/>
<dbReference type="PDBsum" id="8JIS"/>
<dbReference type="PDBsum" id="8JIT"/>
<dbReference type="PDBsum" id="8JIU"/>
<dbReference type="PDBsum" id="8WA3"/>
<dbReference type="PDBsum" id="8WG7"/>
<dbReference type="PDBsum" id="8WG8"/>
<dbReference type="PDBsum" id="8WZ2"/>
<dbReference type="PDBsum" id="8X16"/>
<dbReference type="PDBsum" id="8X17"/>
<dbReference type="PDBsum" id="8X9S"/>
<dbReference type="PDBsum" id="8X9T"/>
<dbReference type="PDBsum" id="8X9U"/>
<dbReference type="PDBsum" id="8XBE"/>
<dbReference type="PDBsum" id="8XBH"/>
<dbReference type="PDBsum" id="8XGR"/>
<dbReference type="PDBsum" id="8XOR"/>
<dbReference type="PDBsum" id="8XOS"/>
<dbReference type="PDBsum" id="8YFS"/>
<dbReference type="PDBsum" id="8YK0"/>
<dbReference type="PDBsum" id="8YKV"/>
<dbReference type="PDBsum" id="8YKW"/>
<dbReference type="PDBsum" id="8YKX"/>
<dbReference type="PDBsum" id="8ZBE"/>
<dbReference type="PDBsum" id="8ZCJ"/>
<dbReference type="PDBsum" id="8ZH8"/>
<dbReference type="PDBsum" id="9F33"/>
<dbReference type="PDBsum" id="9F34"/>
<dbReference type="PDBsum" id="9IJD"/>
<dbReference type="PDBsum" id="9IJE"/>
<dbReference type="PDBsum" id="9J1P"/>
<dbReference type="PDBsum" id="9J5V"/>
<dbReference type="PDBsum" id="9JR2"/>
<dbReference type="PDBsum" id="9JR3"/>
<dbReference type="EMDB" id="EMD-0410"/>
<dbReference type="EMDB" id="EMD-0411"/>
<dbReference type="EMDB" id="EMD-0412"/>
<dbReference type="EMDB" id="EMD-0940"/>
<dbReference type="EMDB" id="EMD-13453"/>
<dbReference type="EMDB" id="EMD-13454"/>
<dbReference type="EMDB" id="EMD-21950"/>
<dbReference type="EMDB" id="EMD-23390"/>
<dbReference type="EMDB" id="EMD-23391"/>
<dbReference type="EMDB" id="EMD-23749"/>
<dbReference type="EMDB" id="EMD-23750"/>
<dbReference type="EMDB" id="EMD-25726"/>
<dbReference type="EMDB" id="EMD-25727"/>
<dbReference type="EMDB" id="EMD-25728"/>
<dbReference type="EMDB" id="EMD-25729"/>
<dbReference type="EMDB" id="EMD-26103"/>
<dbReference type="EMDB" id="EMD-26104"/>
<dbReference type="EMDB" id="EMD-28066"/>
<dbReference type="EMDB" id="EMD-28069"/>
<dbReference type="EMDB" id="EMD-28077"/>
<dbReference type="EMDB" id="EMD-28085"/>
<dbReference type="EMDB" id="EMD-28086"/>
<dbReference type="EMDB" id="EMD-28088"/>
<dbReference type="EMDB" id="EMD-28907"/>
<dbReference type="EMDB" id="EMD-28908"/>
<dbReference type="EMDB" id="EMD-28909"/>
<dbReference type="EMDB" id="EMD-28911"/>
<dbReference type="EMDB" id="EMD-28912"/>
<dbReference type="EMDB" id="EMD-30221"/>
<dbReference type="EMDB" id="EMD-30505"/>
<dbReference type="EMDB" id="EMD-30566"/>
<dbReference type="EMDB" id="EMD-30678"/>
<dbReference type="EMDB" id="EMD-30860"/>
<dbReference type="EMDB" id="EMD-30866"/>
<dbReference type="EMDB" id="EMD-30867"/>
<dbReference type="EMDB" id="EMD-30877"/>
<dbReference type="EMDB" id="EMD-31145"/>
<dbReference type="EMDB" id="EMD-31254"/>
<dbReference type="EMDB" id="EMD-31329"/>
<dbReference type="EMDB" id="EMD-31405"/>
<dbReference type="EMDB" id="EMD-31429"/>
<dbReference type="EMDB" id="EMD-31596"/>
<dbReference type="EMDB" id="EMD-31597"/>
<dbReference type="EMDB" id="EMD-31598"/>
<dbReference type="EMDB" id="EMD-31603"/>
<dbReference type="EMDB" id="EMD-31604"/>
<dbReference type="EMDB" id="EMD-31606"/>
<dbReference type="EMDB" id="EMD-31676"/>
<dbReference type="EMDB" id="EMD-31824"/>
<dbReference type="EMDB" id="EMD-31825"/>
<dbReference type="EMDB" id="EMD-31836"/>
<dbReference type="EMDB" id="EMD-31879"/>
<dbReference type="EMDB" id="EMD-31880"/>
<dbReference type="EMDB" id="EMD-31980"/>
<dbReference type="EMDB" id="EMD-31981"/>
<dbReference type="EMDB" id="EMD-31982"/>
<dbReference type="EMDB" id="EMD-32095"/>
<dbReference type="EMDB" id="EMD-32141"/>
<dbReference type="EMDB" id="EMD-32142"/>
<dbReference type="EMDB" id="EMD-32143"/>
<dbReference type="EMDB" id="EMD-32144"/>
<dbReference type="EMDB" id="EMD-32145"/>
<dbReference type="EMDB" id="EMD-32146"/>
<dbReference type="EMDB" id="EMD-32401"/>
<dbReference type="EMDB" id="EMD-32528"/>
<dbReference type="EMDB" id="EMD-32529"/>
<dbReference type="EMDB" id="EMD-32698"/>
<dbReference type="EMDB" id="EMD-32699"/>
<dbReference type="EMDB" id="EMD-33057"/>
<dbReference type="EMDB" id="EMD-33058"/>
<dbReference type="EMDB" id="EMD-33227"/>
<dbReference type="EMDB" id="EMD-33228"/>
<dbReference type="EMDB" id="EMD-33494"/>
<dbReference type="EMDB" id="EMD-33497"/>
<dbReference type="EMDB" id="EMD-33588"/>
<dbReference type="EMDB" id="EMD-33590"/>
<dbReference type="EMDB" id="EMD-34097"/>
<dbReference type="EMDB" id="EMD-34099"/>
<dbReference type="EMDB" id="EMD-34100"/>
<dbReference type="EMDB" id="EMD-34101"/>
<dbReference type="EMDB" id="EMD-34102"/>
<dbReference type="EMDB" id="EMD-34305"/>
<dbReference type="EMDB" id="EMD-34585"/>
<dbReference type="EMDB" id="EMD-34587"/>
<dbReference type="EMDB" id="EMD-34598"/>
<dbReference type="EMDB" id="EMD-34842"/>
<dbReference type="EMDB" id="EMD-34843"/>
<dbReference type="EMDB" id="EMD-34846"/>
<dbReference type="EMDB" id="EMD-35706"/>
<dbReference type="EMDB" id="EMD-35707"/>
<dbReference type="EMDB" id="EMD-35814"/>
<dbReference type="EMDB" id="EMD-36144"/>
<dbReference type="EMDB" id="EMD-36145"/>
<dbReference type="EMDB" id="EMD-36146"/>
<dbReference type="EMDB" id="EMD-36323"/>
<dbReference type="EMDB" id="EMD-36324"/>
<dbReference type="EMDB" id="EMD-36325"/>
<dbReference type="EMDB" id="EMD-36326"/>
<dbReference type="EMDB" id="EMD-36327"/>
<dbReference type="EMDB" id="EMD-36328"/>
<dbReference type="EMDB" id="EMD-37504"/>
<dbReference type="EMDB" id="EMD-37505"/>
<dbReference type="EMDB" id="EMD-37944"/>
<dbReference type="EMDB" id="EMD-37985"/>
<dbReference type="EMDB" id="EMD-37986"/>
<dbReference type="EMDB" id="EMD-38183"/>
<dbReference type="EMDB" id="EMD-38184"/>
<dbReference type="EMDB" id="EMD-38185"/>
<dbReference type="EMDB" id="EMD-38215"/>
<dbReference type="EMDB" id="EMD-38218"/>
<dbReference type="EMDB" id="EMD-38330"/>
<dbReference type="EMDB" id="EMD-38538"/>
<dbReference type="EMDB" id="EMD-38539"/>
<dbReference type="EMDB" id="EMD-39228"/>
<dbReference type="EMDB" id="EMD-39356"/>
<dbReference type="EMDB" id="EMD-39373"/>
<dbReference type="EMDB" id="EMD-39374"/>
<dbReference type="EMDB" id="EMD-39375"/>
<dbReference type="EMDB" id="EMD-39901"/>
<dbReference type="EMDB" id="EMD-39931"/>
<dbReference type="EMDB" id="EMD-50168"/>
<dbReference type="EMDB" id="EMD-50169"/>
<dbReference type="EMDB" id="EMD-60096"/>
<dbReference type="EMDB" id="EMD-60628"/>
<dbReference type="EMDB" id="EMD-60629"/>
<dbReference type="EMDB" id="EMD-61077"/>
<dbReference type="EMDB" id="EMD-61154"/>
<dbReference type="EMDB" id="EMD-61746"/>
<dbReference type="EMDB" id="EMD-61747"/>
<dbReference type="EMDB" id="EMD-7517"/>
<dbReference type="EMDB" id="EMD-8653"/>
<dbReference type="SMR" id="P54311"/>
<dbReference type="BioGRID" id="246567">
    <property type="interactions" value="8"/>
</dbReference>
<dbReference type="CORUM" id="P54311"/>
<dbReference type="DIP" id="DIP-37029N"/>
<dbReference type="FunCoup" id="P54311">
    <property type="interactions" value="3441"/>
</dbReference>
<dbReference type="IntAct" id="P54311">
    <property type="interactions" value="10"/>
</dbReference>
<dbReference type="MINT" id="P54311"/>
<dbReference type="STRING" id="10116.ENSRNOP00000044340"/>
<dbReference type="GlyGen" id="P54311">
    <property type="glycosylation" value="1 site, 1 O-linked glycan (1 site)"/>
</dbReference>
<dbReference type="iPTMnet" id="P54311"/>
<dbReference type="PhosphoSitePlus" id="P54311"/>
<dbReference type="jPOST" id="P54311"/>
<dbReference type="PaxDb" id="10116-ENSRNOP00000044340"/>
<dbReference type="ABCD" id="P54311">
    <property type="antibodies" value="3 sequenced antibodies"/>
</dbReference>
<dbReference type="Ensembl" id="ENSRNOT00000041789.3">
    <property type="protein sequence ID" value="ENSRNOP00000044340.2"/>
    <property type="gene ID" value="ENSRNOG00000016638.6"/>
</dbReference>
<dbReference type="GeneID" id="24400"/>
<dbReference type="KEGG" id="rno:24400"/>
<dbReference type="AGR" id="RGD:2718"/>
<dbReference type="CTD" id="2782"/>
<dbReference type="RGD" id="2718">
    <property type="gene designation" value="Gnb1"/>
</dbReference>
<dbReference type="eggNOG" id="KOG0286">
    <property type="taxonomic scope" value="Eukaryota"/>
</dbReference>
<dbReference type="GeneTree" id="ENSGT01000000214413"/>
<dbReference type="HOGENOM" id="CLU_000288_57_34_1"/>
<dbReference type="InParanoid" id="P54311"/>
<dbReference type="OMA" id="PLDSQWV"/>
<dbReference type="OrthoDB" id="10255630at2759"/>
<dbReference type="PhylomeDB" id="P54311"/>
<dbReference type="TreeFam" id="TF106149"/>
<dbReference type="Reactome" id="R-RNO-1296041">
    <property type="pathway name" value="Activation of G protein gated Potassium channels"/>
</dbReference>
<dbReference type="Reactome" id="R-RNO-202040">
    <property type="pathway name" value="G-protein activation"/>
</dbReference>
<dbReference type="Reactome" id="R-RNO-2485179">
    <property type="pathway name" value="Activation of the phototransduction cascade"/>
</dbReference>
<dbReference type="Reactome" id="R-RNO-381676">
    <property type="pathway name" value="Glucagon-like Peptide-1 (GLP1) regulates insulin secretion"/>
</dbReference>
<dbReference type="Reactome" id="R-RNO-392170">
    <property type="pathway name" value="ADP signalling through P2Y purinoceptor 12"/>
</dbReference>
<dbReference type="Reactome" id="R-RNO-392451">
    <property type="pathway name" value="G beta:gamma signalling through PI3Kgamma"/>
</dbReference>
<dbReference type="Reactome" id="R-RNO-400042">
    <property type="pathway name" value="Adrenaline,noradrenaline inhibits insulin secretion"/>
</dbReference>
<dbReference type="Reactome" id="R-RNO-4086398">
    <property type="pathway name" value="Ca2+ pathway"/>
</dbReference>
<dbReference type="Reactome" id="R-RNO-416476">
    <property type="pathway name" value="G alpha (q) signalling events"/>
</dbReference>
<dbReference type="Reactome" id="R-RNO-418594">
    <property type="pathway name" value="G alpha (i) signalling events"/>
</dbReference>
<dbReference type="Reactome" id="R-RNO-418597">
    <property type="pathway name" value="G alpha (z) signalling events"/>
</dbReference>
<dbReference type="Reactome" id="R-RNO-420092">
    <property type="pathway name" value="Glucagon-type ligand receptors"/>
</dbReference>
<dbReference type="Reactome" id="R-RNO-428930">
    <property type="pathway name" value="Thromboxane signalling through TP receptor"/>
</dbReference>
<dbReference type="Reactome" id="R-RNO-432040">
    <property type="pathway name" value="Vasopressin regulates renal water homeostasis via Aquaporins"/>
</dbReference>
<dbReference type="Reactome" id="R-RNO-456926">
    <property type="pathway name" value="Thrombin signalling through proteinase activated receptors (PARs)"/>
</dbReference>
<dbReference type="Reactome" id="R-RNO-6814122">
    <property type="pathway name" value="Cooperation of PDCL (PhLP1) and TRiC/CCT in G-protein beta folding"/>
</dbReference>
<dbReference type="Reactome" id="R-RNO-8964616">
    <property type="pathway name" value="G beta:gamma signalling through CDC42"/>
</dbReference>
<dbReference type="Reactome" id="R-RNO-9717207">
    <property type="pathway name" value="Sensory perception of sweet, bitter, and umami (glutamate) taste"/>
</dbReference>
<dbReference type="Reactome" id="R-RNO-9856530">
    <property type="pathway name" value="High laminar flow shear stress activates signaling by PIEZO1 and PECAM1:CDH5:KDR in endothelial cells"/>
</dbReference>
<dbReference type="Reactome" id="R-RNO-997272">
    <property type="pathway name" value="Inhibition of voltage gated Ca2+ channels via Gbeta/gamma subunits"/>
</dbReference>
<dbReference type="EvolutionaryTrace" id="P54311"/>
<dbReference type="PRO" id="PR:P54311"/>
<dbReference type="Proteomes" id="UP000002494">
    <property type="component" value="Chromosome 5"/>
</dbReference>
<dbReference type="Bgee" id="ENSRNOG00000016638">
    <property type="expression patterns" value="Expressed in frontal cortex and 19 other cell types or tissues"/>
</dbReference>
<dbReference type="GO" id="GO:0044297">
    <property type="term" value="C:cell body"/>
    <property type="evidence" value="ECO:0000314"/>
    <property type="project" value="RGD"/>
</dbReference>
<dbReference type="GO" id="GO:0005737">
    <property type="term" value="C:cytoplasm"/>
    <property type="evidence" value="ECO:0000318"/>
    <property type="project" value="GO_Central"/>
</dbReference>
<dbReference type="GO" id="GO:0030425">
    <property type="term" value="C:dendrite"/>
    <property type="evidence" value="ECO:0000314"/>
    <property type="project" value="RGD"/>
</dbReference>
<dbReference type="GO" id="GO:0005834">
    <property type="term" value="C:heterotrimeric G-protein complex"/>
    <property type="evidence" value="ECO:0000314"/>
    <property type="project" value="MGI"/>
</dbReference>
<dbReference type="GO" id="GO:0001917">
    <property type="term" value="C:photoreceptor inner segment"/>
    <property type="evidence" value="ECO:0000314"/>
    <property type="project" value="RGD"/>
</dbReference>
<dbReference type="GO" id="GO:0001750">
    <property type="term" value="C:photoreceptor outer segment"/>
    <property type="evidence" value="ECO:0000266"/>
    <property type="project" value="RGD"/>
</dbReference>
<dbReference type="GO" id="GO:0042622">
    <property type="term" value="C:photoreceptor outer segment membrane"/>
    <property type="evidence" value="ECO:0000314"/>
    <property type="project" value="RGD"/>
</dbReference>
<dbReference type="GO" id="GO:0005886">
    <property type="term" value="C:plasma membrane"/>
    <property type="evidence" value="ECO:0000304"/>
    <property type="project" value="Reactome"/>
</dbReference>
<dbReference type="GO" id="GO:0045202">
    <property type="term" value="C:synapse"/>
    <property type="evidence" value="ECO:0000266"/>
    <property type="project" value="RGD"/>
</dbReference>
<dbReference type="GO" id="GO:0047391">
    <property type="term" value="F:alkylglycerophosphoethanolamine phosphodiesterase activity"/>
    <property type="evidence" value="ECO:0000314"/>
    <property type="project" value="MGI"/>
</dbReference>
<dbReference type="GO" id="GO:0003924">
    <property type="term" value="F:GTPase activity"/>
    <property type="evidence" value="ECO:0000266"/>
    <property type="project" value="RGD"/>
</dbReference>
<dbReference type="GO" id="GO:0051020">
    <property type="term" value="F:GTPase binding"/>
    <property type="evidence" value="ECO:0000266"/>
    <property type="project" value="RGD"/>
</dbReference>
<dbReference type="GO" id="GO:0044877">
    <property type="term" value="F:protein-containing complex binding"/>
    <property type="evidence" value="ECO:0000266"/>
    <property type="project" value="RGD"/>
</dbReference>
<dbReference type="GO" id="GO:0030159">
    <property type="term" value="F:signaling receptor complex adaptor activity"/>
    <property type="evidence" value="ECO:0000318"/>
    <property type="project" value="GO_Central"/>
</dbReference>
<dbReference type="GO" id="GO:0030507">
    <property type="term" value="F:spectrin binding"/>
    <property type="evidence" value="ECO:0000314"/>
    <property type="project" value="MGI"/>
</dbReference>
<dbReference type="GO" id="GO:0010659">
    <property type="term" value="P:cardiac muscle cell apoptotic process"/>
    <property type="evidence" value="ECO:0000314"/>
    <property type="project" value="MGI"/>
</dbReference>
<dbReference type="GO" id="GO:0008283">
    <property type="term" value="P:cell population proliferation"/>
    <property type="evidence" value="ECO:0000266"/>
    <property type="project" value="RGD"/>
</dbReference>
<dbReference type="GO" id="GO:0071456">
    <property type="term" value="P:cellular response to hypoxia"/>
    <property type="evidence" value="ECO:0000314"/>
    <property type="project" value="MGI"/>
</dbReference>
<dbReference type="GO" id="GO:0007186">
    <property type="term" value="P:G protein-coupled receptor signaling pathway"/>
    <property type="evidence" value="ECO:0000315"/>
    <property type="project" value="RGD"/>
</dbReference>
<dbReference type="GO" id="GO:0007200">
    <property type="term" value="P:phospholipase C-activating G protein-coupled receptor signaling pathway"/>
    <property type="evidence" value="ECO:0000266"/>
    <property type="project" value="RGD"/>
</dbReference>
<dbReference type="GO" id="GO:0007204">
    <property type="term" value="P:positive regulation of cytosolic calcium ion concentration"/>
    <property type="evidence" value="ECO:0000315"/>
    <property type="project" value="RGD"/>
</dbReference>
<dbReference type="GO" id="GO:0060041">
    <property type="term" value="P:retina development in camera-type eye"/>
    <property type="evidence" value="ECO:0000266"/>
    <property type="project" value="RGD"/>
</dbReference>
<dbReference type="GO" id="GO:0050909">
    <property type="term" value="P:sensory perception of taste"/>
    <property type="evidence" value="ECO:0000266"/>
    <property type="project" value="RGD"/>
</dbReference>
<dbReference type="CDD" id="cd00200">
    <property type="entry name" value="WD40"/>
    <property type="match status" value="1"/>
</dbReference>
<dbReference type="FunFam" id="2.130.10.10:FF:000007">
    <property type="entry name" value="Guanine nucleotide-binding protein G(I)/G(S)/G(T) subunit beta-1"/>
    <property type="match status" value="1"/>
</dbReference>
<dbReference type="Gene3D" id="2.130.10.10">
    <property type="entry name" value="YVTN repeat-like/Quinoprotein amine dehydrogenase"/>
    <property type="match status" value="1"/>
</dbReference>
<dbReference type="InterPro" id="IPR020472">
    <property type="entry name" value="G-protein_beta_WD-40_rep"/>
</dbReference>
<dbReference type="InterPro" id="IPR001632">
    <property type="entry name" value="Gprotein_B"/>
</dbReference>
<dbReference type="InterPro" id="IPR016346">
    <property type="entry name" value="Guanine_nucleotide-bd_bsu"/>
</dbReference>
<dbReference type="InterPro" id="IPR015943">
    <property type="entry name" value="WD40/YVTN_repeat-like_dom_sf"/>
</dbReference>
<dbReference type="InterPro" id="IPR019775">
    <property type="entry name" value="WD40_repeat_CS"/>
</dbReference>
<dbReference type="InterPro" id="IPR036322">
    <property type="entry name" value="WD40_repeat_dom_sf"/>
</dbReference>
<dbReference type="InterPro" id="IPR001680">
    <property type="entry name" value="WD40_rpt"/>
</dbReference>
<dbReference type="PANTHER" id="PTHR19850">
    <property type="entry name" value="GUANINE NUCLEOTIDE-BINDING PROTEIN BETA G PROTEIN BETA"/>
    <property type="match status" value="1"/>
</dbReference>
<dbReference type="Pfam" id="PF25391">
    <property type="entry name" value="WD40_Gbeta"/>
    <property type="match status" value="1"/>
</dbReference>
<dbReference type="PIRSF" id="PIRSF002394">
    <property type="entry name" value="GN-bd_beta"/>
    <property type="match status" value="1"/>
</dbReference>
<dbReference type="PRINTS" id="PR00319">
    <property type="entry name" value="GPROTEINB"/>
</dbReference>
<dbReference type="PRINTS" id="PR00320">
    <property type="entry name" value="GPROTEINBRPT"/>
</dbReference>
<dbReference type="SMART" id="SM00320">
    <property type="entry name" value="WD40"/>
    <property type="match status" value="7"/>
</dbReference>
<dbReference type="SUPFAM" id="SSF50978">
    <property type="entry name" value="WD40 repeat-like"/>
    <property type="match status" value="1"/>
</dbReference>
<dbReference type="PROSITE" id="PS00678">
    <property type="entry name" value="WD_REPEATS_1"/>
    <property type="match status" value="3"/>
</dbReference>
<dbReference type="PROSITE" id="PS50082">
    <property type="entry name" value="WD_REPEATS_2"/>
    <property type="match status" value="6"/>
</dbReference>
<dbReference type="PROSITE" id="PS50294">
    <property type="entry name" value="WD_REPEATS_REGION"/>
    <property type="match status" value="1"/>
</dbReference>
<proteinExistence type="evidence at protein level"/>
<name>GBB1_RAT</name>
<accession>P54311</accession>
<accession>Q6Q8B1</accession>
<accession>Q9QWG8</accession>
<sequence length="340" mass="37377">MSELDQLRQEAEQLKNQIRDARKACADATLSQITNNIDPVGRIQMRTRRTLRGHLAKIYAMHWGTDSRLLVSASQDGKLIIWDSYTTNKVHAIPLRSSWVMTCAYAPSGNYVACGGLDNICSIYNLKTREGNVRVSRELAGHTGYLSCCRFLDDNQIVTSSGDTTCALWDIETGQQTTTFTGHTGDVMSLSLAPDTRLFVSGACDASAKLWDVREGMCRQTFTGHESDINAICFFPNGNAFATGSDDATCRLFDLRADQELMTYSHDNIICGITSVSFSKSGRLLLAGYDDFNCNVWDALKADRAGVLAGHDNRVSCLGVTDDGMAVATGSWDSFLKIWN</sequence>
<protein>
    <recommendedName>
        <fullName>Guanine nucleotide-binding protein G(I)/G(S)/G(T) subunit beta-1</fullName>
    </recommendedName>
    <alternativeName>
        <fullName>Transducin beta chain 1</fullName>
    </alternativeName>
</protein>
<comment type="function">
    <text>Guanine nucleotide-binding proteins (G proteins) are involved as a modulator or transducer in various transmembrane signaling systems. The beta and gamma chains are required for the GTPase activity, for replacement of GDP by GTP, and for G protein-effector interaction.</text>
</comment>
<comment type="subunit">
    <text evidence="2 3">G proteins are composed of 3 units, alpha, beta and gamma (By similarity). The heterodimer formed by GNB1 and GNG2 interacts with ARHGEF5 (By similarity). The heterodimer formed by GNB1 and GNG2 interacts with GRK2 (By similarity). Forms a complex with GNAO1 and GNG3. Interacts with ARHGEF18 and RASD2 (By similarity). Forms complexes with TAS2R14 and G-proteins; these complexes play a role in the perception of bitterness (By similarity). Component of the TAS2R14-GNAI1 complex, consisting of TAS2R14, GNAI1, GNB1 and GNG2 (By similarity). Component of the TAS2R14-GNAT3 complex, consisting of TAS2R14, GNAT3, GNB1 and GNG2 (By similarity). Component of the TAS2R14-GNAS2 complex, consisting of TAS2R14, GNAS2, GNB1 and GNG2 (By similarity).</text>
</comment>
<comment type="interaction">
    <interactant intactId="EBI-917779">
        <id>P54311</id>
    </interactant>
    <interactant intactId="EBI-7269229">
        <id>Q5BJU7</id>
        <label>Wasf1</label>
    </interactant>
    <organismsDiffer>false</organismsDiffer>
    <experiments>2</experiments>
</comment>
<comment type="PTM">
    <text evidence="1">Phosphorylation at His-266 by NDKB contributes to G protein activation by increasing the high energetic phosphate transfer onto GDP.</text>
</comment>
<comment type="similarity">
    <text evidence="5">Belongs to the WD repeat G protein beta family.</text>
</comment>